<keyword id="KW-0963">Cytoplasm</keyword>
<keyword id="KW-0342">GTP-binding</keyword>
<keyword id="KW-0436">Ligase</keyword>
<keyword id="KW-0460">Magnesium</keyword>
<keyword id="KW-0479">Metal-binding</keyword>
<keyword id="KW-0547">Nucleotide-binding</keyword>
<keyword id="KW-0658">Purine biosynthesis</keyword>
<keyword id="KW-1185">Reference proteome</keyword>
<gene>
    <name evidence="1" type="primary">purA</name>
    <name type="ordered locus">Jann_3179</name>
</gene>
<sequence length="431" mass="46446">MANVVVVGAQWGDEGKGKIVDWLSERADVIARFQGGHNAGHTLVIDGEVFKLHALPSGVVRGGKLSVIGNGVVLDPWHLVKEIATIRDQGVDISPETLMIAENTPLILPIHGELDRAREEAASSGTKIGTTGRGIGPAYEDKVGRRSVRVADLADRATLEAHVDRALQHHDPLRRGLGIDPIDRNALIDALTEIAPQILQYAAPVWKVLNEKRKAGKRILFEGAQGALLDIDFGTYPFVTSSNVIAGQAATGVGLGPNAIDYTLGIVKAYTTRVGEGPFPTELEDADGQRLGERGHEFGTTTGRKRRCGWFDAALVRQTCATSGVTGISLTKLDVLDGFETLKICVGYDLDGTRLDYLPTAADQQARCTPIYEEMPGWSDSTEGARSWADLPAAAIKYVRRVEELIQCPVALLSTSPEREDTILVTDPFAD</sequence>
<accession>Q28MG6</accession>
<reference key="1">
    <citation type="submission" date="2006-02" db="EMBL/GenBank/DDBJ databases">
        <title>Complete sequence of chromosome of Jannaschia sp. CCS1.</title>
        <authorList>
            <consortium name="US DOE Joint Genome Institute"/>
            <person name="Copeland A."/>
            <person name="Lucas S."/>
            <person name="Lapidus A."/>
            <person name="Barry K."/>
            <person name="Detter J.C."/>
            <person name="Glavina del Rio T."/>
            <person name="Hammon N."/>
            <person name="Israni S."/>
            <person name="Pitluck S."/>
            <person name="Brettin T."/>
            <person name="Bruce D."/>
            <person name="Han C."/>
            <person name="Tapia R."/>
            <person name="Gilna P."/>
            <person name="Chertkov O."/>
            <person name="Saunders E."/>
            <person name="Schmutz J."/>
            <person name="Larimer F."/>
            <person name="Land M."/>
            <person name="Kyrpides N."/>
            <person name="Lykidis A."/>
            <person name="Moran M.A."/>
            <person name="Belas R."/>
            <person name="Ye W."/>
            <person name="Buchan A."/>
            <person name="Gonzalez J.M."/>
            <person name="Schell M.A."/>
            <person name="Richardson P."/>
        </authorList>
    </citation>
    <scope>NUCLEOTIDE SEQUENCE [LARGE SCALE GENOMIC DNA]</scope>
    <source>
        <strain>CCS1</strain>
    </source>
</reference>
<evidence type="ECO:0000255" key="1">
    <source>
        <dbReference type="HAMAP-Rule" id="MF_00011"/>
    </source>
</evidence>
<comment type="function">
    <text evidence="1">Plays an important role in the de novo pathway of purine nucleotide biosynthesis. Catalyzes the first committed step in the biosynthesis of AMP from IMP.</text>
</comment>
<comment type="catalytic activity">
    <reaction evidence="1">
        <text>IMP + L-aspartate + GTP = N(6)-(1,2-dicarboxyethyl)-AMP + GDP + phosphate + 2 H(+)</text>
        <dbReference type="Rhea" id="RHEA:15753"/>
        <dbReference type="ChEBI" id="CHEBI:15378"/>
        <dbReference type="ChEBI" id="CHEBI:29991"/>
        <dbReference type="ChEBI" id="CHEBI:37565"/>
        <dbReference type="ChEBI" id="CHEBI:43474"/>
        <dbReference type="ChEBI" id="CHEBI:57567"/>
        <dbReference type="ChEBI" id="CHEBI:58053"/>
        <dbReference type="ChEBI" id="CHEBI:58189"/>
        <dbReference type="EC" id="6.3.4.4"/>
    </reaction>
</comment>
<comment type="cofactor">
    <cofactor evidence="1">
        <name>Mg(2+)</name>
        <dbReference type="ChEBI" id="CHEBI:18420"/>
    </cofactor>
    <text evidence="1">Binds 1 Mg(2+) ion per subunit.</text>
</comment>
<comment type="pathway">
    <text evidence="1">Purine metabolism; AMP biosynthesis via de novo pathway; AMP from IMP: step 1/2.</text>
</comment>
<comment type="subunit">
    <text evidence="1">Homodimer.</text>
</comment>
<comment type="subcellular location">
    <subcellularLocation>
        <location evidence="1">Cytoplasm</location>
    </subcellularLocation>
</comment>
<comment type="similarity">
    <text evidence="1">Belongs to the adenylosuccinate synthetase family.</text>
</comment>
<dbReference type="EC" id="6.3.4.4" evidence="1"/>
<dbReference type="EMBL" id="CP000264">
    <property type="protein sequence ID" value="ABD56096.1"/>
    <property type="molecule type" value="Genomic_DNA"/>
</dbReference>
<dbReference type="RefSeq" id="WP_011456300.1">
    <property type="nucleotide sequence ID" value="NC_007802.1"/>
</dbReference>
<dbReference type="SMR" id="Q28MG6"/>
<dbReference type="STRING" id="290400.Jann_3179"/>
<dbReference type="KEGG" id="jan:Jann_3179"/>
<dbReference type="eggNOG" id="COG0104">
    <property type="taxonomic scope" value="Bacteria"/>
</dbReference>
<dbReference type="HOGENOM" id="CLU_029848_0_0_5"/>
<dbReference type="OrthoDB" id="9807553at2"/>
<dbReference type="UniPathway" id="UPA00075">
    <property type="reaction ID" value="UER00335"/>
</dbReference>
<dbReference type="Proteomes" id="UP000008326">
    <property type="component" value="Chromosome"/>
</dbReference>
<dbReference type="GO" id="GO:0005737">
    <property type="term" value="C:cytoplasm"/>
    <property type="evidence" value="ECO:0007669"/>
    <property type="project" value="UniProtKB-SubCell"/>
</dbReference>
<dbReference type="GO" id="GO:0004019">
    <property type="term" value="F:adenylosuccinate synthase activity"/>
    <property type="evidence" value="ECO:0007669"/>
    <property type="project" value="UniProtKB-UniRule"/>
</dbReference>
<dbReference type="GO" id="GO:0005525">
    <property type="term" value="F:GTP binding"/>
    <property type="evidence" value="ECO:0007669"/>
    <property type="project" value="UniProtKB-UniRule"/>
</dbReference>
<dbReference type="GO" id="GO:0000287">
    <property type="term" value="F:magnesium ion binding"/>
    <property type="evidence" value="ECO:0007669"/>
    <property type="project" value="UniProtKB-UniRule"/>
</dbReference>
<dbReference type="GO" id="GO:0044208">
    <property type="term" value="P:'de novo' AMP biosynthetic process"/>
    <property type="evidence" value="ECO:0007669"/>
    <property type="project" value="UniProtKB-UniRule"/>
</dbReference>
<dbReference type="GO" id="GO:0046040">
    <property type="term" value="P:IMP metabolic process"/>
    <property type="evidence" value="ECO:0007669"/>
    <property type="project" value="TreeGrafter"/>
</dbReference>
<dbReference type="CDD" id="cd03108">
    <property type="entry name" value="AdSS"/>
    <property type="match status" value="1"/>
</dbReference>
<dbReference type="FunFam" id="1.10.300.10:FF:000001">
    <property type="entry name" value="Adenylosuccinate synthetase"/>
    <property type="match status" value="1"/>
</dbReference>
<dbReference type="FunFam" id="3.90.170.10:FF:000001">
    <property type="entry name" value="Adenylosuccinate synthetase"/>
    <property type="match status" value="1"/>
</dbReference>
<dbReference type="Gene3D" id="3.40.440.10">
    <property type="entry name" value="Adenylosuccinate Synthetase, subunit A, domain 1"/>
    <property type="match status" value="1"/>
</dbReference>
<dbReference type="Gene3D" id="1.10.300.10">
    <property type="entry name" value="Adenylosuccinate Synthetase, subunit A, domain 2"/>
    <property type="match status" value="1"/>
</dbReference>
<dbReference type="Gene3D" id="3.90.170.10">
    <property type="entry name" value="Adenylosuccinate Synthetase, subunit A, domain 3"/>
    <property type="match status" value="1"/>
</dbReference>
<dbReference type="HAMAP" id="MF_00011">
    <property type="entry name" value="Adenylosucc_synth"/>
    <property type="match status" value="1"/>
</dbReference>
<dbReference type="InterPro" id="IPR018220">
    <property type="entry name" value="Adenylosuccin_syn_GTP-bd"/>
</dbReference>
<dbReference type="InterPro" id="IPR033128">
    <property type="entry name" value="Adenylosuccin_syn_Lys_AS"/>
</dbReference>
<dbReference type="InterPro" id="IPR042109">
    <property type="entry name" value="Adenylosuccinate_synth_dom1"/>
</dbReference>
<dbReference type="InterPro" id="IPR042110">
    <property type="entry name" value="Adenylosuccinate_synth_dom2"/>
</dbReference>
<dbReference type="InterPro" id="IPR042111">
    <property type="entry name" value="Adenylosuccinate_synth_dom3"/>
</dbReference>
<dbReference type="InterPro" id="IPR001114">
    <property type="entry name" value="Adenylosuccinate_synthetase"/>
</dbReference>
<dbReference type="InterPro" id="IPR027417">
    <property type="entry name" value="P-loop_NTPase"/>
</dbReference>
<dbReference type="NCBIfam" id="NF002223">
    <property type="entry name" value="PRK01117.1"/>
    <property type="match status" value="1"/>
</dbReference>
<dbReference type="NCBIfam" id="TIGR00184">
    <property type="entry name" value="purA"/>
    <property type="match status" value="1"/>
</dbReference>
<dbReference type="PANTHER" id="PTHR11846">
    <property type="entry name" value="ADENYLOSUCCINATE SYNTHETASE"/>
    <property type="match status" value="1"/>
</dbReference>
<dbReference type="PANTHER" id="PTHR11846:SF0">
    <property type="entry name" value="ADENYLOSUCCINATE SYNTHETASE"/>
    <property type="match status" value="1"/>
</dbReference>
<dbReference type="Pfam" id="PF00709">
    <property type="entry name" value="Adenylsucc_synt"/>
    <property type="match status" value="1"/>
</dbReference>
<dbReference type="SMART" id="SM00788">
    <property type="entry name" value="Adenylsucc_synt"/>
    <property type="match status" value="1"/>
</dbReference>
<dbReference type="SUPFAM" id="SSF52540">
    <property type="entry name" value="P-loop containing nucleoside triphosphate hydrolases"/>
    <property type="match status" value="1"/>
</dbReference>
<dbReference type="PROSITE" id="PS01266">
    <property type="entry name" value="ADENYLOSUCCIN_SYN_1"/>
    <property type="match status" value="1"/>
</dbReference>
<dbReference type="PROSITE" id="PS00513">
    <property type="entry name" value="ADENYLOSUCCIN_SYN_2"/>
    <property type="match status" value="1"/>
</dbReference>
<organism>
    <name type="scientific">Jannaschia sp. (strain CCS1)</name>
    <dbReference type="NCBI Taxonomy" id="290400"/>
    <lineage>
        <taxon>Bacteria</taxon>
        <taxon>Pseudomonadati</taxon>
        <taxon>Pseudomonadota</taxon>
        <taxon>Alphaproteobacteria</taxon>
        <taxon>Rhodobacterales</taxon>
        <taxon>Roseobacteraceae</taxon>
        <taxon>Jannaschia</taxon>
    </lineage>
</organism>
<protein>
    <recommendedName>
        <fullName evidence="1">Adenylosuccinate synthetase</fullName>
        <shortName evidence="1">AMPSase</shortName>
        <shortName evidence="1">AdSS</shortName>
        <ecNumber evidence="1">6.3.4.4</ecNumber>
    </recommendedName>
    <alternativeName>
        <fullName evidence="1">IMP--aspartate ligase</fullName>
    </alternativeName>
</protein>
<feature type="chain" id="PRO_1000000839" description="Adenylosuccinate synthetase">
    <location>
        <begin position="1"/>
        <end position="431"/>
    </location>
</feature>
<feature type="active site" description="Proton acceptor" evidence="1">
    <location>
        <position position="13"/>
    </location>
</feature>
<feature type="active site" description="Proton donor" evidence="1">
    <location>
        <position position="41"/>
    </location>
</feature>
<feature type="binding site" evidence="1">
    <location>
        <begin position="12"/>
        <end position="18"/>
    </location>
    <ligand>
        <name>GTP</name>
        <dbReference type="ChEBI" id="CHEBI:37565"/>
    </ligand>
</feature>
<feature type="binding site" description="in other chain" evidence="1">
    <location>
        <begin position="13"/>
        <end position="16"/>
    </location>
    <ligand>
        <name>IMP</name>
        <dbReference type="ChEBI" id="CHEBI:58053"/>
        <note>ligand shared between dimeric partners</note>
    </ligand>
</feature>
<feature type="binding site" evidence="1">
    <location>
        <position position="13"/>
    </location>
    <ligand>
        <name>Mg(2+)</name>
        <dbReference type="ChEBI" id="CHEBI:18420"/>
    </ligand>
</feature>
<feature type="binding site" description="in other chain" evidence="1">
    <location>
        <begin position="38"/>
        <end position="41"/>
    </location>
    <ligand>
        <name>IMP</name>
        <dbReference type="ChEBI" id="CHEBI:58053"/>
        <note>ligand shared between dimeric partners</note>
    </ligand>
</feature>
<feature type="binding site" evidence="1">
    <location>
        <begin position="40"/>
        <end position="42"/>
    </location>
    <ligand>
        <name>GTP</name>
        <dbReference type="ChEBI" id="CHEBI:37565"/>
    </ligand>
</feature>
<feature type="binding site" evidence="1">
    <location>
        <position position="40"/>
    </location>
    <ligand>
        <name>Mg(2+)</name>
        <dbReference type="ChEBI" id="CHEBI:18420"/>
    </ligand>
</feature>
<feature type="binding site" description="in other chain" evidence="1">
    <location>
        <position position="131"/>
    </location>
    <ligand>
        <name>IMP</name>
        <dbReference type="ChEBI" id="CHEBI:58053"/>
        <note>ligand shared between dimeric partners</note>
    </ligand>
</feature>
<feature type="binding site" evidence="1">
    <location>
        <position position="145"/>
    </location>
    <ligand>
        <name>IMP</name>
        <dbReference type="ChEBI" id="CHEBI:58053"/>
        <note>ligand shared between dimeric partners</note>
    </ligand>
</feature>
<feature type="binding site" description="in other chain" evidence="1">
    <location>
        <position position="225"/>
    </location>
    <ligand>
        <name>IMP</name>
        <dbReference type="ChEBI" id="CHEBI:58053"/>
        <note>ligand shared between dimeric partners</note>
    </ligand>
</feature>
<feature type="binding site" description="in other chain" evidence="1">
    <location>
        <position position="240"/>
    </location>
    <ligand>
        <name>IMP</name>
        <dbReference type="ChEBI" id="CHEBI:58053"/>
        <note>ligand shared between dimeric partners</note>
    </ligand>
</feature>
<feature type="binding site" evidence="1">
    <location>
        <begin position="300"/>
        <end position="306"/>
    </location>
    <ligand>
        <name>substrate</name>
    </ligand>
</feature>
<feature type="binding site" description="in other chain" evidence="1">
    <location>
        <position position="304"/>
    </location>
    <ligand>
        <name>IMP</name>
        <dbReference type="ChEBI" id="CHEBI:58053"/>
        <note>ligand shared between dimeric partners</note>
    </ligand>
</feature>
<feature type="binding site" evidence="1">
    <location>
        <position position="306"/>
    </location>
    <ligand>
        <name>GTP</name>
        <dbReference type="ChEBI" id="CHEBI:37565"/>
    </ligand>
</feature>
<feature type="binding site" evidence="1">
    <location>
        <begin position="332"/>
        <end position="334"/>
    </location>
    <ligand>
        <name>GTP</name>
        <dbReference type="ChEBI" id="CHEBI:37565"/>
    </ligand>
</feature>
<feature type="binding site" evidence="1">
    <location>
        <begin position="414"/>
        <end position="416"/>
    </location>
    <ligand>
        <name>GTP</name>
        <dbReference type="ChEBI" id="CHEBI:37565"/>
    </ligand>
</feature>
<name>PURA_JANSC</name>
<proteinExistence type="inferred from homology"/>